<proteinExistence type="evidence at transcript level"/>
<reference key="1">
    <citation type="journal article" date="1988" name="Mol. Gen. Genet.">
        <title>A multigene family in Calothrix sp. PCC 7601 encodes phycocyanin, the major component of the cyanobacterial light harvesting antenna.</title>
        <authorList>
            <person name="Mazel D."/>
            <person name="Houmard J."/>
            <person name="Tandeau de Marsac N."/>
        </authorList>
    </citation>
    <scope>NUCLEOTIDE SEQUENCE [GENOMIC DNA]</scope>
</reference>
<reference key="2">
    <citation type="journal article" date="1989" name="Nature">
        <title>Adaptive eradication of methionine and cysteine from cyanobacterial light-harvesting proteins.</title>
        <authorList>
            <person name="Mazel D."/>
            <person name="Marliere P."/>
        </authorList>
    </citation>
    <scope>NUCLEOTIDE SEQUENCE [GENOMIC DNA]</scope>
</reference>
<accession>P14876</accession>
<name>PHCA3_MICDP</name>
<comment type="function">
    <text>Light-harvesting photosynthetic bile pigment-protein from the phycobiliprotein complex (phycobilisome, PBS). Phycocyanin is the major phycobiliprotein in the PBS rod.</text>
</comment>
<comment type="subunit">
    <text evidence="2">Heterodimer of an alpha and a beta subunit, which further assembles into trimers and the trimers into hexamers.</text>
</comment>
<comment type="subcellular location">
    <subcellularLocation>
        <location evidence="1">Cellular thylakoid membrane</location>
        <topology evidence="1">Peripheral membrane protein</topology>
        <orientation evidence="1">Cytoplasmic side</orientation>
    </subcellularLocation>
    <text evidence="1">Part of the phycobilisome rod.</text>
</comment>
<comment type="induction">
    <text>Phycocyanin-3 is expressed in red light under conditions of sulfur deprivation.</text>
</comment>
<comment type="PTM">
    <text evidence="1 2">Contains one covalently linked bilin chromophore.</text>
</comment>
<comment type="similarity">
    <text evidence="3">Belongs to the phycobiliprotein family.</text>
</comment>
<sequence>MTKTPLTEAVVSADSQGRFLSTELQVAFGRFRQAGSSLEAAKALSKKASSLAEAAANAVYQKFPYTTTTSGPNYASTQTGKDKCVRDIGYYLRIVTYGLVVGGTGPIDDYLIGGLAEINRTFELSPSWYIEALKYIKANHGLSGDPAVEANSYIDYIINALS</sequence>
<evidence type="ECO:0000250" key="1"/>
<evidence type="ECO:0000250" key="2">
    <source>
        <dbReference type="UniProtKB" id="P13530"/>
    </source>
</evidence>
<evidence type="ECO:0000305" key="3"/>
<dbReference type="EMBL" id="X06083">
    <property type="protein sequence ID" value="CAA29460.1"/>
    <property type="molecule type" value="Genomic_DNA"/>
</dbReference>
<dbReference type="SMR" id="P14876"/>
<dbReference type="GO" id="GO:0030089">
    <property type="term" value="C:phycobilisome"/>
    <property type="evidence" value="ECO:0007669"/>
    <property type="project" value="UniProtKB-KW"/>
</dbReference>
<dbReference type="GO" id="GO:0031676">
    <property type="term" value="C:plasma membrane-derived thylakoid membrane"/>
    <property type="evidence" value="ECO:0007669"/>
    <property type="project" value="UniProtKB-SubCell"/>
</dbReference>
<dbReference type="GO" id="GO:0015979">
    <property type="term" value="P:photosynthesis"/>
    <property type="evidence" value="ECO:0007669"/>
    <property type="project" value="UniProtKB-KW"/>
</dbReference>
<dbReference type="CDD" id="cd14770">
    <property type="entry name" value="PC-PEC_alpha"/>
    <property type="match status" value="1"/>
</dbReference>
<dbReference type="Gene3D" id="1.10.490.20">
    <property type="entry name" value="Phycocyanins"/>
    <property type="match status" value="1"/>
</dbReference>
<dbReference type="InterPro" id="IPR009050">
    <property type="entry name" value="Globin-like_sf"/>
</dbReference>
<dbReference type="InterPro" id="IPR012128">
    <property type="entry name" value="Phycobilisome_asu/bsu"/>
</dbReference>
<dbReference type="InterPro" id="IPR038719">
    <property type="entry name" value="Phycobilisome_asu/bsu_sf"/>
</dbReference>
<dbReference type="InterPro" id="IPR006246">
    <property type="entry name" value="Phycocyanin_a"/>
</dbReference>
<dbReference type="NCBIfam" id="TIGR01338">
    <property type="entry name" value="phycocy_alpha"/>
    <property type="match status" value="1"/>
</dbReference>
<dbReference type="PANTHER" id="PTHR34011:SF4">
    <property type="entry name" value="C-PHYCOCYANIN ALPHA SUBUNIT"/>
    <property type="match status" value="1"/>
</dbReference>
<dbReference type="PANTHER" id="PTHR34011">
    <property type="entry name" value="PHYCOBILISOME 32.1 KDA LINKER POLYPEPTIDE, PHYCOCYANIN-ASSOCIATED, ROD 2-RELATED"/>
    <property type="match status" value="1"/>
</dbReference>
<dbReference type="Pfam" id="PF00502">
    <property type="entry name" value="Phycobilisome"/>
    <property type="match status" value="1"/>
</dbReference>
<dbReference type="PIRSF" id="PIRSF000081">
    <property type="entry name" value="Phycocyanin"/>
    <property type="match status" value="1"/>
</dbReference>
<dbReference type="SUPFAM" id="SSF46458">
    <property type="entry name" value="Globin-like"/>
    <property type="match status" value="1"/>
</dbReference>
<protein>
    <recommendedName>
        <fullName>C-phycocyanin-3 alpha subunit</fullName>
    </recommendedName>
</protein>
<feature type="chain" id="PRO_0000199115" description="C-phycocyanin-3 alpha subunit">
    <location>
        <begin position="1"/>
        <end position="162"/>
    </location>
</feature>
<feature type="binding site" description="covalent" evidence="2">
    <location>
        <position position="84"/>
    </location>
    <ligand>
        <name>(2R,3E)-phycocyanobilin</name>
        <dbReference type="ChEBI" id="CHEBI:85275"/>
    </ligand>
</feature>
<keyword id="KW-0042">Antenna complex</keyword>
<keyword id="KW-0089">Bile pigment</keyword>
<keyword id="KW-0157">Chromophore</keyword>
<keyword id="KW-0249">Electron transport</keyword>
<keyword id="KW-0472">Membrane</keyword>
<keyword id="KW-0602">Photosynthesis</keyword>
<keyword id="KW-0605">Phycobilisome</keyword>
<keyword id="KW-0793">Thylakoid</keyword>
<keyword id="KW-0813">Transport</keyword>
<gene>
    <name type="primary">cpcA3</name>
</gene>
<organism>
    <name type="scientific">Microchaete diplosiphon</name>
    <name type="common">Fremyella diplosiphon</name>
    <dbReference type="NCBI Taxonomy" id="1197"/>
    <lineage>
        <taxon>Bacteria</taxon>
        <taxon>Bacillati</taxon>
        <taxon>Cyanobacteriota</taxon>
        <taxon>Cyanophyceae</taxon>
        <taxon>Nostocales</taxon>
        <taxon>Rivulariaceae</taxon>
        <taxon>Microchaete</taxon>
    </lineage>
</organism>